<proteinExistence type="inferred from homology"/>
<reference key="1">
    <citation type="submission" date="2002-12" db="EMBL/GenBank/DDBJ databases">
        <title>Complete genome sequence of Vibrio vulnificus CMCP6.</title>
        <authorList>
            <person name="Rhee J.H."/>
            <person name="Kim S.Y."/>
            <person name="Chung S.S."/>
            <person name="Kim J.J."/>
            <person name="Moon Y.H."/>
            <person name="Jeong H."/>
            <person name="Choy H.E."/>
        </authorList>
    </citation>
    <scope>NUCLEOTIDE SEQUENCE [LARGE SCALE GENOMIC DNA]</scope>
    <source>
        <strain>CMCP6</strain>
    </source>
</reference>
<dbReference type="EMBL" id="AE016795">
    <property type="protein sequence ID" value="AAO09948.1"/>
    <property type="molecule type" value="Genomic_DNA"/>
</dbReference>
<dbReference type="RefSeq" id="WP_011079458.1">
    <property type="nucleotide sequence ID" value="NC_004459.3"/>
</dbReference>
<dbReference type="SMR" id="Q8DCB7"/>
<dbReference type="KEGG" id="vvu:VV1_1522"/>
<dbReference type="HOGENOM" id="CLU_130694_5_0_6"/>
<dbReference type="Proteomes" id="UP000002275">
    <property type="component" value="Chromosome 1"/>
</dbReference>
<dbReference type="GO" id="GO:0005737">
    <property type="term" value="C:cytoplasm"/>
    <property type="evidence" value="ECO:0007669"/>
    <property type="project" value="TreeGrafter"/>
</dbReference>
<dbReference type="Gene3D" id="3.30.1200.10">
    <property type="entry name" value="YggU-like"/>
    <property type="match status" value="1"/>
</dbReference>
<dbReference type="HAMAP" id="MF_00634">
    <property type="entry name" value="UPF0235"/>
    <property type="match status" value="1"/>
</dbReference>
<dbReference type="InterPro" id="IPR003746">
    <property type="entry name" value="DUF167"/>
</dbReference>
<dbReference type="InterPro" id="IPR036591">
    <property type="entry name" value="YggU-like_sf"/>
</dbReference>
<dbReference type="NCBIfam" id="TIGR00251">
    <property type="entry name" value="DUF167 family protein"/>
    <property type="match status" value="1"/>
</dbReference>
<dbReference type="NCBIfam" id="NF003466">
    <property type="entry name" value="PRK05090.1"/>
    <property type="match status" value="1"/>
</dbReference>
<dbReference type="PANTHER" id="PTHR13420">
    <property type="entry name" value="UPF0235 PROTEIN C15ORF40"/>
    <property type="match status" value="1"/>
</dbReference>
<dbReference type="PANTHER" id="PTHR13420:SF7">
    <property type="entry name" value="UPF0235 PROTEIN C15ORF40"/>
    <property type="match status" value="1"/>
</dbReference>
<dbReference type="Pfam" id="PF02594">
    <property type="entry name" value="DUF167"/>
    <property type="match status" value="1"/>
</dbReference>
<dbReference type="SMART" id="SM01152">
    <property type="entry name" value="DUF167"/>
    <property type="match status" value="1"/>
</dbReference>
<dbReference type="SUPFAM" id="SSF69786">
    <property type="entry name" value="YggU-like"/>
    <property type="match status" value="1"/>
</dbReference>
<protein>
    <recommendedName>
        <fullName evidence="1">UPF0235 protein VV1_1522</fullName>
    </recommendedName>
</protein>
<organism>
    <name type="scientific">Vibrio vulnificus (strain CMCP6)</name>
    <dbReference type="NCBI Taxonomy" id="216895"/>
    <lineage>
        <taxon>Bacteria</taxon>
        <taxon>Pseudomonadati</taxon>
        <taxon>Pseudomonadota</taxon>
        <taxon>Gammaproteobacteria</taxon>
        <taxon>Vibrionales</taxon>
        <taxon>Vibrionaceae</taxon>
        <taxon>Vibrio</taxon>
    </lineage>
</organism>
<feature type="chain" id="PRO_0000139462" description="UPF0235 protein VV1_1522">
    <location>
        <begin position="1"/>
        <end position="96"/>
    </location>
</feature>
<sequence length="96" mass="10684">MSQTVWLDGEDVVLRLYIQPKASRDKILGLHGDELKIAITAPPVDGKANGHLTKLLGKWFKVAKSLVTIEKGELGRHKQVRVHTPQQIPDEVKAIL</sequence>
<name>Y1522_VIBVU</name>
<evidence type="ECO:0000255" key="1">
    <source>
        <dbReference type="HAMAP-Rule" id="MF_00634"/>
    </source>
</evidence>
<comment type="similarity">
    <text evidence="1">Belongs to the UPF0235 family.</text>
</comment>
<accession>Q8DCB7</accession>
<gene>
    <name type="ordered locus">VV1_1522</name>
</gene>